<sequence>MTELSPKYNPAEVEAGRYQKWLDADVFKPSGDQKAKPYSIVIPPPNVTGKLHLGHAWDTTLQDIIIRQKRMQGFDTLWLPGMDHAGIATQAKVEERLREQGISRYDLGRDKFLDKVWEWKDEYATTIKEQWGKMGLSVDYSRERFTLDEGLSKAVRKVFVDLYKKGWIYRGEFIINWDPAARTALSDIEVIHKDVEGAFYHMNYMLEDGSRALQVATTRPETMFGDVAVAVNPEDPRYKDLIGKNVILPIVNKLIPIVGDEHADPEFGTGVVKITPAHDPNDFEVGQRHNLPQVNVMNDDGTMNELAGDFAGMDRFEARQATVAKLEELGALVNIEKRVHSVGHSERSGAVVEPRLSTQWFVKMDELAKQAMDNQETDNRVDFYPPRFNDTFLQWMENVHDWVISRQLWWGHQIPAWYNAEGEIYVGEEAPEGDGWTQDEDVLDTWFSSALWPFSTMGWPDTDVEDFKRYFPTSTLVTGYDIIFFWVSRMIFQSLEFTGRQPFQNVLIHGLIRDEEGRKMSKSLGNGIDPMDVIEKYGADSLRWFLSNGSAPGQDVRFSYEKMDASWNFINKIWNISRYILMNNEGLTLEEAESNVAKVAASEAGNVTDQWILHNLNETIAKVTENFDKFEFGVAGHILYNFIWEEFANWYVELTKEVLYSDNEAEKVITRSVLLYTLDKIVRLLHPIMPFVTEEIYAQYAQGSIVTVDYPVVRPAFENEAAHKGVERLKDLIRAVRNARAEVNVAPSKPITILVKTADSELEDFFTSNVNYIKRFTNPEKLEISSAIAAPELAMTSIITGAEIYLPLADLLNVEEELARLDKELAKWQKELDMVGKKLGNERFVANAKPEVIQKEKDKQADYQAKYDATQERIAEMKKIKS</sequence>
<protein>
    <recommendedName>
        <fullName evidence="1">Valine--tRNA ligase</fullName>
        <ecNumber evidence="1">6.1.1.9</ecNumber>
    </recommendedName>
    <alternativeName>
        <fullName evidence="1">Valyl-tRNA synthetase</fullName>
        <shortName evidence="1">ValRS</shortName>
    </alternativeName>
</protein>
<name>SYV_STRPM</name>
<dbReference type="EC" id="6.1.1.9" evidence="1"/>
<dbReference type="EMBL" id="CP000056">
    <property type="protein sequence ID" value="AAX72406.1"/>
    <property type="molecule type" value="Genomic_DNA"/>
</dbReference>
<dbReference type="RefSeq" id="WP_011284987.1">
    <property type="nucleotide sequence ID" value="NC_007296.2"/>
</dbReference>
<dbReference type="SMR" id="Q48SA4"/>
<dbReference type="KEGG" id="spb:M28_Spy1296"/>
<dbReference type="HOGENOM" id="CLU_001493_0_2_9"/>
<dbReference type="GO" id="GO:0005829">
    <property type="term" value="C:cytosol"/>
    <property type="evidence" value="ECO:0007669"/>
    <property type="project" value="TreeGrafter"/>
</dbReference>
<dbReference type="GO" id="GO:0002161">
    <property type="term" value="F:aminoacyl-tRNA deacylase activity"/>
    <property type="evidence" value="ECO:0007669"/>
    <property type="project" value="InterPro"/>
</dbReference>
<dbReference type="GO" id="GO:0005524">
    <property type="term" value="F:ATP binding"/>
    <property type="evidence" value="ECO:0007669"/>
    <property type="project" value="UniProtKB-UniRule"/>
</dbReference>
<dbReference type="GO" id="GO:0004832">
    <property type="term" value="F:valine-tRNA ligase activity"/>
    <property type="evidence" value="ECO:0007669"/>
    <property type="project" value="UniProtKB-UniRule"/>
</dbReference>
<dbReference type="GO" id="GO:0006438">
    <property type="term" value="P:valyl-tRNA aminoacylation"/>
    <property type="evidence" value="ECO:0007669"/>
    <property type="project" value="UniProtKB-UniRule"/>
</dbReference>
<dbReference type="CDD" id="cd07962">
    <property type="entry name" value="Anticodon_Ia_Val"/>
    <property type="match status" value="1"/>
</dbReference>
<dbReference type="CDD" id="cd00817">
    <property type="entry name" value="ValRS_core"/>
    <property type="match status" value="1"/>
</dbReference>
<dbReference type="FunFam" id="1.10.287.380:FF:000001">
    <property type="entry name" value="Valine--tRNA ligase"/>
    <property type="match status" value="1"/>
</dbReference>
<dbReference type="FunFam" id="1.10.730.10:FF:000014">
    <property type="entry name" value="Valine--tRNA ligase"/>
    <property type="match status" value="1"/>
</dbReference>
<dbReference type="FunFam" id="3.40.50.620:FF:000032">
    <property type="entry name" value="Valine--tRNA ligase"/>
    <property type="match status" value="1"/>
</dbReference>
<dbReference type="FunFam" id="3.40.50.620:FF:000098">
    <property type="entry name" value="Valine--tRNA ligase"/>
    <property type="match status" value="1"/>
</dbReference>
<dbReference type="FunFam" id="3.90.740.10:FF:000005">
    <property type="entry name" value="Valine--tRNA ligase, mitochondrial"/>
    <property type="match status" value="1"/>
</dbReference>
<dbReference type="Gene3D" id="3.40.50.620">
    <property type="entry name" value="HUPs"/>
    <property type="match status" value="3"/>
</dbReference>
<dbReference type="Gene3D" id="1.10.730.10">
    <property type="entry name" value="Isoleucyl-tRNA Synthetase, Domain 1"/>
    <property type="match status" value="1"/>
</dbReference>
<dbReference type="Gene3D" id="1.10.287.380">
    <property type="entry name" value="Valyl-tRNA synthetase, C-terminal domain"/>
    <property type="match status" value="1"/>
</dbReference>
<dbReference type="Gene3D" id="3.90.740.10">
    <property type="entry name" value="Valyl/Leucyl/Isoleucyl-tRNA synthetase, editing domain"/>
    <property type="match status" value="1"/>
</dbReference>
<dbReference type="HAMAP" id="MF_02004">
    <property type="entry name" value="Val_tRNA_synth_type1"/>
    <property type="match status" value="1"/>
</dbReference>
<dbReference type="InterPro" id="IPR001412">
    <property type="entry name" value="aa-tRNA-synth_I_CS"/>
</dbReference>
<dbReference type="InterPro" id="IPR002300">
    <property type="entry name" value="aa-tRNA-synth_Ia"/>
</dbReference>
<dbReference type="InterPro" id="IPR033705">
    <property type="entry name" value="Anticodon_Ia_Val"/>
</dbReference>
<dbReference type="InterPro" id="IPR013155">
    <property type="entry name" value="M/V/L/I-tRNA-synth_anticd-bd"/>
</dbReference>
<dbReference type="InterPro" id="IPR014729">
    <property type="entry name" value="Rossmann-like_a/b/a_fold"/>
</dbReference>
<dbReference type="InterPro" id="IPR010978">
    <property type="entry name" value="tRNA-bd_arm"/>
</dbReference>
<dbReference type="InterPro" id="IPR009080">
    <property type="entry name" value="tRNAsynth_Ia_anticodon-bd"/>
</dbReference>
<dbReference type="InterPro" id="IPR037118">
    <property type="entry name" value="Val-tRNA_synth_C_sf"/>
</dbReference>
<dbReference type="InterPro" id="IPR019499">
    <property type="entry name" value="Val-tRNA_synth_tRNA-bd"/>
</dbReference>
<dbReference type="InterPro" id="IPR009008">
    <property type="entry name" value="Val/Leu/Ile-tRNA-synth_edit"/>
</dbReference>
<dbReference type="InterPro" id="IPR002303">
    <property type="entry name" value="Valyl-tRNA_ligase"/>
</dbReference>
<dbReference type="NCBIfam" id="NF004349">
    <property type="entry name" value="PRK05729.1"/>
    <property type="match status" value="1"/>
</dbReference>
<dbReference type="NCBIfam" id="TIGR00422">
    <property type="entry name" value="valS"/>
    <property type="match status" value="1"/>
</dbReference>
<dbReference type="PANTHER" id="PTHR11946:SF93">
    <property type="entry name" value="VALINE--TRNA LIGASE, CHLOROPLASTIC_MITOCHONDRIAL 2"/>
    <property type="match status" value="1"/>
</dbReference>
<dbReference type="PANTHER" id="PTHR11946">
    <property type="entry name" value="VALYL-TRNA SYNTHETASES"/>
    <property type="match status" value="1"/>
</dbReference>
<dbReference type="Pfam" id="PF08264">
    <property type="entry name" value="Anticodon_1"/>
    <property type="match status" value="1"/>
</dbReference>
<dbReference type="Pfam" id="PF00133">
    <property type="entry name" value="tRNA-synt_1"/>
    <property type="match status" value="1"/>
</dbReference>
<dbReference type="Pfam" id="PF10458">
    <property type="entry name" value="Val_tRNA-synt_C"/>
    <property type="match status" value="1"/>
</dbReference>
<dbReference type="PRINTS" id="PR00986">
    <property type="entry name" value="TRNASYNTHVAL"/>
</dbReference>
<dbReference type="SUPFAM" id="SSF47323">
    <property type="entry name" value="Anticodon-binding domain of a subclass of class I aminoacyl-tRNA synthetases"/>
    <property type="match status" value="1"/>
</dbReference>
<dbReference type="SUPFAM" id="SSF52374">
    <property type="entry name" value="Nucleotidylyl transferase"/>
    <property type="match status" value="1"/>
</dbReference>
<dbReference type="SUPFAM" id="SSF46589">
    <property type="entry name" value="tRNA-binding arm"/>
    <property type="match status" value="1"/>
</dbReference>
<dbReference type="SUPFAM" id="SSF50677">
    <property type="entry name" value="ValRS/IleRS/LeuRS editing domain"/>
    <property type="match status" value="1"/>
</dbReference>
<dbReference type="PROSITE" id="PS00178">
    <property type="entry name" value="AA_TRNA_LIGASE_I"/>
    <property type="match status" value="1"/>
</dbReference>
<feature type="chain" id="PRO_0000224578" description="Valine--tRNA ligase">
    <location>
        <begin position="1"/>
        <end position="882"/>
    </location>
</feature>
<feature type="coiled-coil region" evidence="1">
    <location>
        <begin position="808"/>
        <end position="882"/>
    </location>
</feature>
<feature type="short sequence motif" description="'HIGH' region">
    <location>
        <begin position="45"/>
        <end position="55"/>
    </location>
</feature>
<feature type="short sequence motif" description="'KMSKS' region">
    <location>
        <begin position="519"/>
        <end position="523"/>
    </location>
</feature>
<feature type="binding site" evidence="1">
    <location>
        <position position="522"/>
    </location>
    <ligand>
        <name>ATP</name>
        <dbReference type="ChEBI" id="CHEBI:30616"/>
    </ligand>
</feature>
<organism>
    <name type="scientific">Streptococcus pyogenes serotype M28 (strain MGAS6180)</name>
    <dbReference type="NCBI Taxonomy" id="319701"/>
    <lineage>
        <taxon>Bacteria</taxon>
        <taxon>Bacillati</taxon>
        <taxon>Bacillota</taxon>
        <taxon>Bacilli</taxon>
        <taxon>Lactobacillales</taxon>
        <taxon>Streptococcaceae</taxon>
        <taxon>Streptococcus</taxon>
    </lineage>
</organism>
<reference key="1">
    <citation type="journal article" date="2005" name="J. Infect. Dis.">
        <title>Genome sequence of a serotype M28 strain of group A Streptococcus: potential new insights into puerperal sepsis and bacterial disease specificity.</title>
        <authorList>
            <person name="Green N.M."/>
            <person name="Zhang S."/>
            <person name="Porcella S.F."/>
            <person name="Nagiec M.J."/>
            <person name="Barbian K.D."/>
            <person name="Beres S.B."/>
            <person name="Lefebvre R.B."/>
            <person name="Musser J.M."/>
        </authorList>
    </citation>
    <scope>NUCLEOTIDE SEQUENCE [LARGE SCALE GENOMIC DNA]</scope>
    <source>
        <strain>MGAS6180</strain>
    </source>
</reference>
<evidence type="ECO:0000255" key="1">
    <source>
        <dbReference type="HAMAP-Rule" id="MF_02004"/>
    </source>
</evidence>
<accession>Q48SA4</accession>
<proteinExistence type="inferred from homology"/>
<comment type="function">
    <text evidence="1">Catalyzes the attachment of valine to tRNA(Val). As ValRS can inadvertently accommodate and process structurally similar amino acids such as threonine, to avoid such errors, it has a 'posttransfer' editing activity that hydrolyzes mischarged Thr-tRNA(Val) in a tRNA-dependent manner.</text>
</comment>
<comment type="catalytic activity">
    <reaction evidence="1">
        <text>tRNA(Val) + L-valine + ATP = L-valyl-tRNA(Val) + AMP + diphosphate</text>
        <dbReference type="Rhea" id="RHEA:10704"/>
        <dbReference type="Rhea" id="RHEA-COMP:9672"/>
        <dbReference type="Rhea" id="RHEA-COMP:9708"/>
        <dbReference type="ChEBI" id="CHEBI:30616"/>
        <dbReference type="ChEBI" id="CHEBI:33019"/>
        <dbReference type="ChEBI" id="CHEBI:57762"/>
        <dbReference type="ChEBI" id="CHEBI:78442"/>
        <dbReference type="ChEBI" id="CHEBI:78537"/>
        <dbReference type="ChEBI" id="CHEBI:456215"/>
        <dbReference type="EC" id="6.1.1.9"/>
    </reaction>
</comment>
<comment type="subunit">
    <text evidence="1">Monomer.</text>
</comment>
<comment type="subcellular location">
    <subcellularLocation>
        <location evidence="1">Cytoplasm</location>
    </subcellularLocation>
</comment>
<comment type="domain">
    <text evidence="1">ValRS has two distinct active sites: one for aminoacylation and one for editing. The misactivated threonine is translocated from the active site to the editing site.</text>
</comment>
<comment type="domain">
    <text evidence="1">The C-terminal coiled-coil domain is crucial for aminoacylation activity.</text>
</comment>
<comment type="similarity">
    <text evidence="1">Belongs to the class-I aminoacyl-tRNA synthetase family. ValS type 1 subfamily.</text>
</comment>
<keyword id="KW-0030">Aminoacyl-tRNA synthetase</keyword>
<keyword id="KW-0067">ATP-binding</keyword>
<keyword id="KW-0175">Coiled coil</keyword>
<keyword id="KW-0963">Cytoplasm</keyword>
<keyword id="KW-0436">Ligase</keyword>
<keyword id="KW-0547">Nucleotide-binding</keyword>
<keyword id="KW-0648">Protein biosynthesis</keyword>
<gene>
    <name evidence="1" type="primary">valS</name>
    <name type="ordered locus">M28_Spy1296</name>
</gene>